<name>SYA_HAEIG</name>
<comment type="function">
    <text evidence="1">Catalyzes the attachment of alanine to tRNA(Ala) in a two-step reaction: alanine is first activated by ATP to form Ala-AMP and then transferred to the acceptor end of tRNA(Ala). Also edits incorrectly charged Ser-tRNA(Ala) and Gly-tRNA(Ala) via its editing domain.</text>
</comment>
<comment type="catalytic activity">
    <reaction evidence="1">
        <text>tRNA(Ala) + L-alanine + ATP = L-alanyl-tRNA(Ala) + AMP + diphosphate</text>
        <dbReference type="Rhea" id="RHEA:12540"/>
        <dbReference type="Rhea" id="RHEA-COMP:9657"/>
        <dbReference type="Rhea" id="RHEA-COMP:9923"/>
        <dbReference type="ChEBI" id="CHEBI:30616"/>
        <dbReference type="ChEBI" id="CHEBI:33019"/>
        <dbReference type="ChEBI" id="CHEBI:57972"/>
        <dbReference type="ChEBI" id="CHEBI:78442"/>
        <dbReference type="ChEBI" id="CHEBI:78497"/>
        <dbReference type="ChEBI" id="CHEBI:456215"/>
        <dbReference type="EC" id="6.1.1.7"/>
    </reaction>
</comment>
<comment type="cofactor">
    <cofactor evidence="1">
        <name>Zn(2+)</name>
        <dbReference type="ChEBI" id="CHEBI:29105"/>
    </cofactor>
    <text evidence="1">Binds 1 zinc ion per subunit.</text>
</comment>
<comment type="subcellular location">
    <subcellularLocation>
        <location evidence="1">Cytoplasm</location>
    </subcellularLocation>
</comment>
<comment type="domain">
    <text evidence="1">Consists of three domains; the N-terminal catalytic domain, the editing domain and the C-terminal C-Ala domain. The editing domain removes incorrectly charged amino acids, while the C-Ala domain, along with tRNA(Ala), serves as a bridge to cooperatively bring together the editing and aminoacylation centers thus stimulating deacylation of misacylated tRNAs.</text>
</comment>
<comment type="similarity">
    <text evidence="1">Belongs to the class-II aminoacyl-tRNA synthetase family.</text>
</comment>
<evidence type="ECO:0000255" key="1">
    <source>
        <dbReference type="HAMAP-Rule" id="MF_00036"/>
    </source>
</evidence>
<reference key="1">
    <citation type="journal article" date="2007" name="Genome Biol.">
        <title>Characterization and modeling of the Haemophilus influenzae core and supragenomes based on the complete genomic sequences of Rd and 12 clinical nontypeable strains.</title>
        <authorList>
            <person name="Hogg J.S."/>
            <person name="Hu F.Z."/>
            <person name="Janto B."/>
            <person name="Boissy R."/>
            <person name="Hayes J."/>
            <person name="Keefe R."/>
            <person name="Post J.C."/>
            <person name="Ehrlich G.D."/>
        </authorList>
    </citation>
    <scope>NUCLEOTIDE SEQUENCE [LARGE SCALE GENOMIC DNA]</scope>
    <source>
        <strain>PittGG</strain>
    </source>
</reference>
<organism>
    <name type="scientific">Haemophilus influenzae (strain PittGG)</name>
    <dbReference type="NCBI Taxonomy" id="374931"/>
    <lineage>
        <taxon>Bacteria</taxon>
        <taxon>Pseudomonadati</taxon>
        <taxon>Pseudomonadota</taxon>
        <taxon>Gammaproteobacteria</taxon>
        <taxon>Pasteurellales</taxon>
        <taxon>Pasteurellaceae</taxon>
        <taxon>Haemophilus</taxon>
    </lineage>
</organism>
<protein>
    <recommendedName>
        <fullName evidence="1">Alanine--tRNA ligase</fullName>
        <ecNumber evidence="1">6.1.1.7</ecNumber>
    </recommendedName>
    <alternativeName>
        <fullName evidence="1">Alanyl-tRNA synthetase</fullName>
        <shortName evidence="1">AlaRS</shortName>
    </alternativeName>
</protein>
<gene>
    <name evidence="1" type="primary">alaS</name>
    <name type="ordered locus">CGSHiGG_07565</name>
</gene>
<sequence>MKTTAEIRQSFLDFFHSKGHQVVESSSLVPENDPTLLFTNAGMNQFKDVFLGMDKRPYSRATTAQRCVRAGGKHNDLENVGYTARHHTFFEMLGNFSFGDYFKQDAINFAWEYLTSPQWLGLPKEKLWVTVYETDDEAYNIWNKEVGVPAERIIRIGDNKGSPYASDNFWAMGDTGPCGPCTEIFYDHGDHIWGGPPGSPEEDGDRYIEIWNVVFMQFNRLADGTMEKLPRPSVDTGMGLERISAVLQHVNSNYEIDIFKTLIAKTAEIVGATDLTNKSLRVIADHIRSCAYLIADGVIPSNEGRGYVLRRIIRRAVRHGHLLGAKESFFYKLVPTLIEVMAEAGKDVKAKQTNVEKLLRLEEEQFARTLERGLSLLDEALSQVKDGILSGEVAFKLYDTYGFPLDLTADVCRERNITIDEQAFDREMEAQRTRAQAASQFGVDYNSVIRVDGETKFEGYTEVESQAKITALFYDGKSVESIEAGQSAVVILENTPFYAESGGQIGDSGYLSTQGVTFNVKDTQKYGQVFGHIGELTQGSLKVGQSVNAIVDAKRRHNTSLNHSATHLLHAALRQILGLHVVQKGSLVSDKALRFDFAQPEAITKEQLSEIETLVNQKIRANFPVQTDIMDIDSAKAKGAMALFGEKYGDKVRVLTMGDFSIELCGGIHAKRTGDIGLFKIITENAVAAGIRRIEAVTGQNAIDWLHNQQRILTQSADLLKSDVNTLAEKIQQLQDKTKKVEKELQGLKEKAAMQAGSDFVKSAVKINGVSVIAQQLDGIETKSLRVMVDDLKNQLGSGVIAFASILDKKVNLVVGVTNDLTAKIKAGELVNLMAQQVGGKGGGRPDMAMAGGSQPENVAQAIKVAQDWLNKNL</sequence>
<keyword id="KW-0030">Aminoacyl-tRNA synthetase</keyword>
<keyword id="KW-0067">ATP-binding</keyword>
<keyword id="KW-0963">Cytoplasm</keyword>
<keyword id="KW-0436">Ligase</keyword>
<keyword id="KW-0479">Metal-binding</keyword>
<keyword id="KW-0547">Nucleotide-binding</keyword>
<keyword id="KW-0648">Protein biosynthesis</keyword>
<keyword id="KW-0694">RNA-binding</keyword>
<keyword id="KW-0820">tRNA-binding</keyword>
<keyword id="KW-0862">Zinc</keyword>
<dbReference type="EC" id="6.1.1.7" evidence="1"/>
<dbReference type="EMBL" id="CP000672">
    <property type="protein sequence ID" value="ABR00372.1"/>
    <property type="molecule type" value="Genomic_DNA"/>
</dbReference>
<dbReference type="SMR" id="A5UHW6"/>
<dbReference type="KEGG" id="hiq:CGSHiGG_07565"/>
<dbReference type="HOGENOM" id="CLU_004485_1_1_6"/>
<dbReference type="Proteomes" id="UP000001990">
    <property type="component" value="Chromosome"/>
</dbReference>
<dbReference type="GO" id="GO:0005829">
    <property type="term" value="C:cytosol"/>
    <property type="evidence" value="ECO:0007669"/>
    <property type="project" value="TreeGrafter"/>
</dbReference>
<dbReference type="GO" id="GO:0004813">
    <property type="term" value="F:alanine-tRNA ligase activity"/>
    <property type="evidence" value="ECO:0007669"/>
    <property type="project" value="UniProtKB-UniRule"/>
</dbReference>
<dbReference type="GO" id="GO:0002161">
    <property type="term" value="F:aminoacyl-tRNA deacylase activity"/>
    <property type="evidence" value="ECO:0007669"/>
    <property type="project" value="TreeGrafter"/>
</dbReference>
<dbReference type="GO" id="GO:0005524">
    <property type="term" value="F:ATP binding"/>
    <property type="evidence" value="ECO:0007669"/>
    <property type="project" value="UniProtKB-UniRule"/>
</dbReference>
<dbReference type="GO" id="GO:0000049">
    <property type="term" value="F:tRNA binding"/>
    <property type="evidence" value="ECO:0007669"/>
    <property type="project" value="UniProtKB-KW"/>
</dbReference>
<dbReference type="GO" id="GO:0008270">
    <property type="term" value="F:zinc ion binding"/>
    <property type="evidence" value="ECO:0007669"/>
    <property type="project" value="UniProtKB-UniRule"/>
</dbReference>
<dbReference type="GO" id="GO:0006419">
    <property type="term" value="P:alanyl-tRNA aminoacylation"/>
    <property type="evidence" value="ECO:0007669"/>
    <property type="project" value="UniProtKB-UniRule"/>
</dbReference>
<dbReference type="GO" id="GO:0045892">
    <property type="term" value="P:negative regulation of DNA-templated transcription"/>
    <property type="evidence" value="ECO:0007669"/>
    <property type="project" value="TreeGrafter"/>
</dbReference>
<dbReference type="CDD" id="cd00673">
    <property type="entry name" value="AlaRS_core"/>
    <property type="match status" value="1"/>
</dbReference>
<dbReference type="FunFam" id="2.40.30.130:FF:000001">
    <property type="entry name" value="Alanine--tRNA ligase"/>
    <property type="match status" value="1"/>
</dbReference>
<dbReference type="FunFam" id="3.10.310.40:FF:000001">
    <property type="entry name" value="Alanine--tRNA ligase"/>
    <property type="match status" value="1"/>
</dbReference>
<dbReference type="FunFam" id="3.30.54.20:FF:000001">
    <property type="entry name" value="Alanine--tRNA ligase"/>
    <property type="match status" value="1"/>
</dbReference>
<dbReference type="FunFam" id="3.30.930.10:FF:000004">
    <property type="entry name" value="Alanine--tRNA ligase"/>
    <property type="match status" value="1"/>
</dbReference>
<dbReference type="FunFam" id="3.30.980.10:FF:000004">
    <property type="entry name" value="Alanine--tRNA ligase, cytoplasmic"/>
    <property type="match status" value="1"/>
</dbReference>
<dbReference type="Gene3D" id="2.40.30.130">
    <property type="match status" value="1"/>
</dbReference>
<dbReference type="Gene3D" id="3.10.310.40">
    <property type="match status" value="1"/>
</dbReference>
<dbReference type="Gene3D" id="3.30.54.20">
    <property type="match status" value="1"/>
</dbReference>
<dbReference type="Gene3D" id="6.10.250.550">
    <property type="match status" value="1"/>
</dbReference>
<dbReference type="Gene3D" id="3.30.930.10">
    <property type="entry name" value="Bira Bifunctional Protein, Domain 2"/>
    <property type="match status" value="1"/>
</dbReference>
<dbReference type="Gene3D" id="3.30.980.10">
    <property type="entry name" value="Threonyl-trna Synthetase, Chain A, domain 2"/>
    <property type="match status" value="1"/>
</dbReference>
<dbReference type="HAMAP" id="MF_00036_B">
    <property type="entry name" value="Ala_tRNA_synth_B"/>
    <property type="match status" value="1"/>
</dbReference>
<dbReference type="InterPro" id="IPR045864">
    <property type="entry name" value="aa-tRNA-synth_II/BPL/LPL"/>
</dbReference>
<dbReference type="InterPro" id="IPR002318">
    <property type="entry name" value="Ala-tRNA-lgiase_IIc"/>
</dbReference>
<dbReference type="InterPro" id="IPR018162">
    <property type="entry name" value="Ala-tRNA-ligase_IIc_anticod-bd"/>
</dbReference>
<dbReference type="InterPro" id="IPR018165">
    <property type="entry name" value="Ala-tRNA-synth_IIc_core"/>
</dbReference>
<dbReference type="InterPro" id="IPR018164">
    <property type="entry name" value="Ala-tRNA-synth_IIc_N"/>
</dbReference>
<dbReference type="InterPro" id="IPR050058">
    <property type="entry name" value="Ala-tRNA_ligase"/>
</dbReference>
<dbReference type="InterPro" id="IPR023033">
    <property type="entry name" value="Ala_tRNA_ligase_euk/bac"/>
</dbReference>
<dbReference type="InterPro" id="IPR003156">
    <property type="entry name" value="DHHA1_dom"/>
</dbReference>
<dbReference type="InterPro" id="IPR018163">
    <property type="entry name" value="Thr/Ala-tRNA-synth_IIc_edit"/>
</dbReference>
<dbReference type="InterPro" id="IPR009000">
    <property type="entry name" value="Transl_B-barrel_sf"/>
</dbReference>
<dbReference type="InterPro" id="IPR012947">
    <property type="entry name" value="tRNA_SAD"/>
</dbReference>
<dbReference type="NCBIfam" id="TIGR00344">
    <property type="entry name" value="alaS"/>
    <property type="match status" value="1"/>
</dbReference>
<dbReference type="PANTHER" id="PTHR11777:SF9">
    <property type="entry name" value="ALANINE--TRNA LIGASE, CYTOPLASMIC"/>
    <property type="match status" value="1"/>
</dbReference>
<dbReference type="PANTHER" id="PTHR11777">
    <property type="entry name" value="ALANYL-TRNA SYNTHETASE"/>
    <property type="match status" value="1"/>
</dbReference>
<dbReference type="Pfam" id="PF02272">
    <property type="entry name" value="DHHA1"/>
    <property type="match status" value="1"/>
</dbReference>
<dbReference type="Pfam" id="PF01411">
    <property type="entry name" value="tRNA-synt_2c"/>
    <property type="match status" value="1"/>
</dbReference>
<dbReference type="Pfam" id="PF07973">
    <property type="entry name" value="tRNA_SAD"/>
    <property type="match status" value="1"/>
</dbReference>
<dbReference type="PRINTS" id="PR00980">
    <property type="entry name" value="TRNASYNTHALA"/>
</dbReference>
<dbReference type="SMART" id="SM00863">
    <property type="entry name" value="tRNA_SAD"/>
    <property type="match status" value="1"/>
</dbReference>
<dbReference type="SUPFAM" id="SSF55681">
    <property type="entry name" value="Class II aaRS and biotin synthetases"/>
    <property type="match status" value="1"/>
</dbReference>
<dbReference type="SUPFAM" id="SSF101353">
    <property type="entry name" value="Putative anticodon-binding domain of alanyl-tRNA synthetase (AlaRS)"/>
    <property type="match status" value="1"/>
</dbReference>
<dbReference type="SUPFAM" id="SSF55186">
    <property type="entry name" value="ThrRS/AlaRS common domain"/>
    <property type="match status" value="1"/>
</dbReference>
<dbReference type="SUPFAM" id="SSF50447">
    <property type="entry name" value="Translation proteins"/>
    <property type="match status" value="1"/>
</dbReference>
<dbReference type="PROSITE" id="PS50860">
    <property type="entry name" value="AA_TRNA_LIGASE_II_ALA"/>
    <property type="match status" value="1"/>
</dbReference>
<accession>A5UHW6</accession>
<feature type="chain" id="PRO_0000347626" description="Alanine--tRNA ligase">
    <location>
        <begin position="1"/>
        <end position="874"/>
    </location>
</feature>
<feature type="binding site" evidence="1">
    <location>
        <position position="563"/>
    </location>
    <ligand>
        <name>Zn(2+)</name>
        <dbReference type="ChEBI" id="CHEBI:29105"/>
    </ligand>
</feature>
<feature type="binding site" evidence="1">
    <location>
        <position position="567"/>
    </location>
    <ligand>
        <name>Zn(2+)</name>
        <dbReference type="ChEBI" id="CHEBI:29105"/>
    </ligand>
</feature>
<feature type="binding site" evidence="1">
    <location>
        <position position="665"/>
    </location>
    <ligand>
        <name>Zn(2+)</name>
        <dbReference type="ChEBI" id="CHEBI:29105"/>
    </ligand>
</feature>
<feature type="binding site" evidence="1">
    <location>
        <position position="669"/>
    </location>
    <ligand>
        <name>Zn(2+)</name>
        <dbReference type="ChEBI" id="CHEBI:29105"/>
    </ligand>
</feature>
<proteinExistence type="inferred from homology"/>